<proteinExistence type="evidence at protein level"/>
<organism>
    <name type="scientific">Escherichia coli (strain K12)</name>
    <dbReference type="NCBI Taxonomy" id="83333"/>
    <lineage>
        <taxon>Bacteria</taxon>
        <taxon>Pseudomonadati</taxon>
        <taxon>Pseudomonadota</taxon>
        <taxon>Gammaproteobacteria</taxon>
        <taxon>Enterobacterales</taxon>
        <taxon>Enterobacteriaceae</taxon>
        <taxon>Escherichia</taxon>
    </lineage>
</organism>
<evidence type="ECO:0000255" key="1"/>
<evidence type="ECO:0000269" key="2">
    <source>
    </source>
</evidence>
<evidence type="ECO:0000269" key="3">
    <source>
    </source>
</evidence>
<evidence type="ECO:0000269" key="4">
    <source>
    </source>
</evidence>
<evidence type="ECO:0000269" key="5">
    <source>
    </source>
</evidence>
<evidence type="ECO:0000305" key="6"/>
<evidence type="ECO:0000305" key="7">
    <source>
    </source>
</evidence>
<sequence length="330" mass="34910">MIYVSRRLLITCLLLVSACVVAGIWGLRSGAVTLETSQVFAALMGDAPRSMTMVVTEWRLPRVLMALLIGAALGVSGAIFQSLMRNPLGSPDVMGFNTGAWSGVLVAMVLFGQDLTAIALSAMVGGIVTSLLVWLLAWRNGIDTFRLIIIGIGVRAMLVAFNTWLLLKASLETALTAGLWNAGSLNGLTWAKTSPSAPIIILMLIAAALLVRRMRLLEMGDDTACALGVSVERSRLLMMLVAVVLTAAATALAGPISFIALVAPHIARRISGTARWGLTQAALCGALLLLAADLCAQQLFMPYQLPVGVVTVSLGGIYLIVLLIQESRKK</sequence>
<comment type="function">
    <text evidence="2 4 6">Part of the ABC transporter complex FepBDGC involved in ferric enterobactin uptake (PubMed:1479347, PubMed:1838574). Responsible for the translocation of the substrate across the membrane (Probable).</text>
</comment>
<comment type="subunit">
    <text evidence="7">The complex is composed of two ATP-binding proteins (FepC), two transmembrane proteins (FepD and FepG) and a solute-binding protein (FepB).</text>
</comment>
<comment type="subcellular location">
    <subcellularLocation>
        <location evidence="2 3">Cell inner membrane</location>
        <topology evidence="1">Multi-pass membrane protein</topology>
    </subcellularLocation>
</comment>
<comment type="induction">
    <text evidence="4 5">Controlled in part by the amount of available iron (PubMed:1838574). Induced 1.4-fold by hydroxyurea (PubMed:20005847).</text>
</comment>
<comment type="similarity">
    <text evidence="6">Belongs to the binding-protein-dependent transport system permease family. FecCD subfamily.</text>
</comment>
<keyword id="KW-0997">Cell inner membrane</keyword>
<keyword id="KW-1003">Cell membrane</keyword>
<keyword id="KW-0406">Ion transport</keyword>
<keyword id="KW-0408">Iron</keyword>
<keyword id="KW-0410">Iron transport</keyword>
<keyword id="KW-0472">Membrane</keyword>
<keyword id="KW-1185">Reference proteome</keyword>
<keyword id="KW-0812">Transmembrane</keyword>
<keyword id="KW-1133">Transmembrane helix</keyword>
<keyword id="KW-0813">Transport</keyword>
<accession>P23877</accession>
<accession>P77587</accession>
<accession>Q2MBL2</accession>
<reference key="1">
    <citation type="journal article" date="1991" name="Mol. Microbiol.">
        <title>Nucleotide sequence and genetic organization of the ferric enterobactin transport system: homology to other periplasmic binding protein-dependent systems in Escherichia coli.</title>
        <authorList>
            <person name="Shea C.M."/>
            <person name="McIntosh M.A."/>
        </authorList>
    </citation>
    <scope>NUCLEOTIDE SEQUENCE [GENOMIC DNA]</scope>
    <scope>FUNCTION</scope>
    <scope>INDUCTION</scope>
    <source>
        <strain>K12</strain>
    </source>
</reference>
<reference key="2">
    <citation type="submission" date="1997-01" db="EMBL/GenBank/DDBJ databases">
        <title>Sequence of minutes 4-25 of Escherichia coli.</title>
        <authorList>
            <person name="Chung E."/>
            <person name="Allen E."/>
            <person name="Araujo R."/>
            <person name="Aparicio A.M."/>
            <person name="Davis K."/>
            <person name="Duncan M."/>
            <person name="Federspiel N."/>
            <person name="Hyman R."/>
            <person name="Kalman S."/>
            <person name="Komp C."/>
            <person name="Kurdi O."/>
            <person name="Lew H."/>
            <person name="Lin D."/>
            <person name="Namath A."/>
            <person name="Oefner P."/>
            <person name="Roberts D."/>
            <person name="Schramm S."/>
            <person name="Davis R.W."/>
        </authorList>
    </citation>
    <scope>NUCLEOTIDE SEQUENCE [LARGE SCALE GENOMIC DNA]</scope>
    <source>
        <strain>K12 / MG1655 / ATCC 47076</strain>
    </source>
</reference>
<reference key="3">
    <citation type="journal article" date="1997" name="Science">
        <title>The complete genome sequence of Escherichia coli K-12.</title>
        <authorList>
            <person name="Blattner F.R."/>
            <person name="Plunkett G. III"/>
            <person name="Bloch C.A."/>
            <person name="Perna N.T."/>
            <person name="Burland V."/>
            <person name="Riley M."/>
            <person name="Collado-Vides J."/>
            <person name="Glasner J.D."/>
            <person name="Rode C.K."/>
            <person name="Mayhew G.F."/>
            <person name="Gregor J."/>
            <person name="Davis N.W."/>
            <person name="Kirkpatrick H.A."/>
            <person name="Goeden M.A."/>
            <person name="Rose D.J."/>
            <person name="Mau B."/>
            <person name="Shao Y."/>
        </authorList>
    </citation>
    <scope>NUCLEOTIDE SEQUENCE [LARGE SCALE GENOMIC DNA]</scope>
    <source>
        <strain>K12 / MG1655 / ATCC 47076</strain>
    </source>
</reference>
<reference key="4">
    <citation type="journal article" date="2006" name="Mol. Syst. Biol.">
        <title>Highly accurate genome sequences of Escherichia coli K-12 strains MG1655 and W3110.</title>
        <authorList>
            <person name="Hayashi K."/>
            <person name="Morooka N."/>
            <person name="Yamamoto Y."/>
            <person name="Fujita K."/>
            <person name="Isono K."/>
            <person name="Choi S."/>
            <person name="Ohtsubo E."/>
            <person name="Baba T."/>
            <person name="Wanner B.L."/>
            <person name="Mori H."/>
            <person name="Horiuchi T."/>
        </authorList>
    </citation>
    <scope>NUCLEOTIDE SEQUENCE [LARGE SCALE GENOMIC DNA]</scope>
    <source>
        <strain>K12 / W3110 / ATCC 27325 / DSM 5911</strain>
    </source>
</reference>
<reference key="5">
    <citation type="journal article" date="1992" name="J. Gen. Microbiol.">
        <title>Identification of hydrophobic proteins FepD and FepG of the Escherichia coli ferrienterobactin permease.</title>
        <authorList>
            <person name="Chenault S.S."/>
            <person name="Earhart C.F."/>
        </authorList>
    </citation>
    <scope>FUNCTION</scope>
    <scope>SUBUNIT</scope>
    <scope>SUBCELLULAR LOCATION</scope>
</reference>
<reference key="6">
    <citation type="journal article" date="2005" name="Science">
        <title>Global topology analysis of the Escherichia coli inner membrane proteome.</title>
        <authorList>
            <person name="Daley D.O."/>
            <person name="Rapp M."/>
            <person name="Granseth E."/>
            <person name="Melen K."/>
            <person name="Drew D."/>
            <person name="von Heijne G."/>
        </authorList>
    </citation>
    <scope>TOPOLOGY [LARGE SCALE ANALYSIS]</scope>
    <scope>SUBCELLULAR LOCATION</scope>
    <source>
        <strain>K12 / MG1655 / ATCC 47076</strain>
    </source>
</reference>
<reference key="7">
    <citation type="journal article" date="2009" name="Mol. Cell">
        <title>Hydroxyurea induces hydroxyl radical-mediated cell death in Escherichia coli.</title>
        <authorList>
            <person name="Davies B.W."/>
            <person name="Kohanski M.A."/>
            <person name="Simmons L.A."/>
            <person name="Winkler J.A."/>
            <person name="Collins J.J."/>
            <person name="Walker G.C."/>
        </authorList>
    </citation>
    <scope>INDUCTION BY HYDROXYUREA</scope>
    <source>
        <strain>K12 / MC4100 / ATCC 35695 / DSM 6574</strain>
    </source>
</reference>
<name>FEPG_ECOLI</name>
<dbReference type="EMBL" id="X57471">
    <property type="protein sequence ID" value="CAA40708.1"/>
    <property type="molecule type" value="Genomic_DNA"/>
</dbReference>
<dbReference type="EMBL" id="U82598">
    <property type="protein sequence ID" value="AAB40788.1"/>
    <property type="molecule type" value="Genomic_DNA"/>
</dbReference>
<dbReference type="EMBL" id="U00096">
    <property type="protein sequence ID" value="AAC73690.1"/>
    <property type="molecule type" value="Genomic_DNA"/>
</dbReference>
<dbReference type="EMBL" id="AP009048">
    <property type="protein sequence ID" value="BAE76344.1"/>
    <property type="molecule type" value="Genomic_DNA"/>
</dbReference>
<dbReference type="PIR" id="C64792">
    <property type="entry name" value="C64792"/>
</dbReference>
<dbReference type="RefSeq" id="NP_415121.1">
    <property type="nucleotide sequence ID" value="NC_000913.3"/>
</dbReference>
<dbReference type="RefSeq" id="WP_000640988.1">
    <property type="nucleotide sequence ID" value="NZ_SSZK01000032.1"/>
</dbReference>
<dbReference type="SMR" id="P23877"/>
<dbReference type="BioGRID" id="4261377">
    <property type="interactions" value="423"/>
</dbReference>
<dbReference type="ComplexPortal" id="CPX-4404">
    <property type="entry name" value="Ferric-enterobactin ABC transporter complex"/>
</dbReference>
<dbReference type="DIP" id="DIP-9597N"/>
<dbReference type="FunCoup" id="P23877">
    <property type="interactions" value="219"/>
</dbReference>
<dbReference type="IntAct" id="P23877">
    <property type="interactions" value="1"/>
</dbReference>
<dbReference type="STRING" id="511145.b0589"/>
<dbReference type="TCDB" id="3.A.1.14.2">
    <property type="family name" value="the atp-binding cassette (abc) superfamily"/>
</dbReference>
<dbReference type="PaxDb" id="511145-b0589"/>
<dbReference type="EnsemblBacteria" id="AAC73690">
    <property type="protein sequence ID" value="AAC73690"/>
    <property type="gene ID" value="b0589"/>
</dbReference>
<dbReference type="GeneID" id="945209"/>
<dbReference type="KEGG" id="ecj:JW0581"/>
<dbReference type="KEGG" id="eco:b0589"/>
<dbReference type="KEGG" id="ecoc:C3026_02940"/>
<dbReference type="PATRIC" id="fig|1411691.4.peg.1680"/>
<dbReference type="EchoBASE" id="EB0294"/>
<dbReference type="eggNOG" id="COG4779">
    <property type="taxonomic scope" value="Bacteria"/>
</dbReference>
<dbReference type="HOGENOM" id="CLU_013016_1_1_6"/>
<dbReference type="InParanoid" id="P23877"/>
<dbReference type="OMA" id="AWKRGVH"/>
<dbReference type="OrthoDB" id="9055647at2"/>
<dbReference type="PhylomeDB" id="P23877"/>
<dbReference type="BioCyc" id="EcoCyc:FEPG-MONOMER"/>
<dbReference type="BioCyc" id="MetaCyc:FEPG-MONOMER"/>
<dbReference type="PRO" id="PR:P23877"/>
<dbReference type="Proteomes" id="UP000000625">
    <property type="component" value="Chromosome"/>
</dbReference>
<dbReference type="GO" id="GO:0055052">
    <property type="term" value="C:ATP-binding cassette (ABC) transporter complex, substrate-binding subunit-containing"/>
    <property type="evidence" value="ECO:0000303"/>
    <property type="project" value="ComplexPortal"/>
</dbReference>
<dbReference type="GO" id="GO:0016020">
    <property type="term" value="C:membrane"/>
    <property type="evidence" value="ECO:0000303"/>
    <property type="project" value="ComplexPortal"/>
</dbReference>
<dbReference type="GO" id="GO:0005886">
    <property type="term" value="C:plasma membrane"/>
    <property type="evidence" value="ECO:0000314"/>
    <property type="project" value="EcoCyc"/>
</dbReference>
<dbReference type="GO" id="GO:0015620">
    <property type="term" value="F:ferric-enterobactin transmembrane transporter activity"/>
    <property type="evidence" value="ECO:0000315"/>
    <property type="project" value="EcoCyc"/>
</dbReference>
<dbReference type="GO" id="GO:0022857">
    <property type="term" value="F:transmembrane transporter activity"/>
    <property type="evidence" value="ECO:0000318"/>
    <property type="project" value="GO_Central"/>
</dbReference>
<dbReference type="GO" id="GO:0015685">
    <property type="term" value="P:ferric-enterobactin import into cell"/>
    <property type="evidence" value="ECO:0000315"/>
    <property type="project" value="EcoCyc"/>
</dbReference>
<dbReference type="GO" id="GO:0033212">
    <property type="term" value="P:iron import into cell"/>
    <property type="evidence" value="ECO:0000303"/>
    <property type="project" value="ComplexPortal"/>
</dbReference>
<dbReference type="GO" id="GO:0033214">
    <property type="term" value="P:siderophore-dependent iron import into cell"/>
    <property type="evidence" value="ECO:0000318"/>
    <property type="project" value="GO_Central"/>
</dbReference>
<dbReference type="CDD" id="cd06550">
    <property type="entry name" value="TM_ABC_iron-siderophores_like"/>
    <property type="match status" value="1"/>
</dbReference>
<dbReference type="FunFam" id="1.10.3470.10:FF:000001">
    <property type="entry name" value="Vitamin B12 ABC transporter permease BtuC"/>
    <property type="match status" value="1"/>
</dbReference>
<dbReference type="Gene3D" id="1.10.3470.10">
    <property type="entry name" value="ABC transporter involved in vitamin B12 uptake, BtuC"/>
    <property type="match status" value="1"/>
</dbReference>
<dbReference type="InterPro" id="IPR037294">
    <property type="entry name" value="ABC_BtuC-like"/>
</dbReference>
<dbReference type="InterPro" id="IPR000522">
    <property type="entry name" value="ABC_transptr_permease_BtuC"/>
</dbReference>
<dbReference type="NCBIfam" id="NF007759">
    <property type="entry name" value="PRK10440.1"/>
    <property type="match status" value="1"/>
</dbReference>
<dbReference type="PANTHER" id="PTHR30472">
    <property type="entry name" value="FERRIC ENTEROBACTIN TRANSPORT SYSTEM PERMEASE PROTEIN"/>
    <property type="match status" value="1"/>
</dbReference>
<dbReference type="PANTHER" id="PTHR30472:SF24">
    <property type="entry name" value="FERRIC ENTEROBACTIN TRANSPORT SYSTEM PERMEASE PROTEIN FEPG"/>
    <property type="match status" value="1"/>
</dbReference>
<dbReference type="Pfam" id="PF01032">
    <property type="entry name" value="FecCD"/>
    <property type="match status" value="1"/>
</dbReference>
<dbReference type="SUPFAM" id="SSF81345">
    <property type="entry name" value="ABC transporter involved in vitamin B12 uptake, BtuC"/>
    <property type="match status" value="1"/>
</dbReference>
<feature type="chain" id="PRO_0000060023" description="Ferric enterobactin transport system permease protein FepG">
    <location>
        <begin position="1"/>
        <end position="330"/>
    </location>
</feature>
<feature type="topological domain" description="Periplasmic" evidence="1">
    <location>
        <begin position="1"/>
        <end position="7"/>
    </location>
</feature>
<feature type="transmembrane region" description="Helical" evidence="1">
    <location>
        <begin position="8"/>
        <end position="28"/>
    </location>
</feature>
<feature type="topological domain" description="Cytoplasmic" evidence="1">
    <location>
        <begin position="29"/>
        <end position="62"/>
    </location>
</feature>
<feature type="transmembrane region" description="Helical" evidence="1">
    <location>
        <begin position="63"/>
        <end position="83"/>
    </location>
</feature>
<feature type="topological domain" description="Periplasmic" evidence="1">
    <location>
        <begin position="84"/>
        <end position="92"/>
    </location>
</feature>
<feature type="transmembrane region" description="Helical" evidence="1">
    <location>
        <begin position="93"/>
        <end position="113"/>
    </location>
</feature>
<feature type="topological domain" description="Cytoplasmic" evidence="1">
    <location>
        <begin position="114"/>
        <end position="117"/>
    </location>
</feature>
<feature type="transmembrane region" description="Helical" evidence="1">
    <location>
        <begin position="118"/>
        <end position="138"/>
    </location>
</feature>
<feature type="topological domain" description="Periplasmic" evidence="1">
    <location>
        <begin position="139"/>
        <end position="146"/>
    </location>
</feature>
<feature type="transmembrane region" description="Helical" evidence="1">
    <location>
        <begin position="147"/>
        <end position="167"/>
    </location>
</feature>
<feature type="topological domain" description="Cytoplasmic" evidence="1">
    <location>
        <begin position="168"/>
        <end position="190"/>
    </location>
</feature>
<feature type="transmembrane region" description="Helical" evidence="1">
    <location>
        <begin position="191"/>
        <end position="211"/>
    </location>
</feature>
<feature type="topological domain" description="Periplasmic" evidence="1">
    <location>
        <begin position="212"/>
        <end position="235"/>
    </location>
</feature>
<feature type="transmembrane region" description="Helical" evidence="1">
    <location>
        <begin position="236"/>
        <end position="256"/>
    </location>
</feature>
<feature type="topological domain" description="Cytoplasmic" evidence="1">
    <location>
        <begin position="257"/>
        <end position="275"/>
    </location>
</feature>
<feature type="transmembrane region" description="Helical" evidence="1">
    <location>
        <begin position="276"/>
        <end position="296"/>
    </location>
</feature>
<feature type="topological domain" description="Periplasmic" evidence="1">
    <location>
        <begin position="297"/>
        <end position="303"/>
    </location>
</feature>
<feature type="transmembrane region" description="Helical" evidence="1">
    <location>
        <begin position="304"/>
        <end position="324"/>
    </location>
</feature>
<feature type="topological domain" description="Cytoplasmic" evidence="3">
    <location>
        <begin position="325"/>
        <end position="330"/>
    </location>
</feature>
<feature type="sequence conflict" description="In Ref. 1; CAA40708." evidence="6" ref="1">
    <original>SV</original>
    <variation>RL</variation>
    <location>
        <begin position="230"/>
        <end position="231"/>
    </location>
</feature>
<gene>
    <name type="primary">fepG</name>
    <name type="ordered locus">b0589</name>
    <name type="ordered locus">JW0581</name>
</gene>
<protein>
    <recommendedName>
        <fullName evidence="6">Ferric enterobactin transport system permease protein FepG</fullName>
    </recommendedName>
</protein>